<comment type="function">
    <text evidence="1">The UvrABC repair system catalyzes the recognition and processing of DNA lesions. A damage recognition complex composed of 2 UvrA and 2 UvrB subunits scans DNA for abnormalities. Upon binding of the UvrA(2)B(2) complex to a putative damaged site, the DNA wraps around one UvrB monomer. DNA wrap is dependent on ATP binding by UvrB and probably causes local melting of the DNA helix, facilitating insertion of UvrB beta-hairpin between the DNA strands. Then UvrB probes one DNA strand for the presence of a lesion. If a lesion is found the UvrA subunits dissociate and the UvrB-DNA preincision complex is formed. This complex is subsequently bound by UvrC and the second UvrB is released. If no lesion is found, the DNA wraps around the other UvrB subunit that will check the other stand for damage.</text>
</comment>
<comment type="subunit">
    <text evidence="1">Forms a heterotetramer with UvrA during the search for lesions. Interacts with UvrC in an incision complex.</text>
</comment>
<comment type="subcellular location">
    <subcellularLocation>
        <location evidence="1">Cytoplasm</location>
    </subcellularLocation>
</comment>
<comment type="domain">
    <text evidence="1">The beta-hairpin motif is involved in DNA binding.</text>
</comment>
<comment type="similarity">
    <text evidence="1">Belongs to the UvrB family.</text>
</comment>
<sequence>MLELTSEFKPSPDQQEAIKGIVKSIKKGNKYQTLLGVTGSGKTFTMANVIKELNIPTLIMSHNKSLCAQLYSEFKGFFSKNHVEYFISYYDYYQPEAYIPRTDVFIEKDSSTNEDLERLRLSATASLLSYEDVVCIASVSANYGLGNPNEYIGMVLIFELGMQISQKELLKKLVDMGYKRNDNFFDRADFRVQGDIIDIYPAYYEDEVVRLEFFGDELDAMYHYNVLENKKGKDLKRFILYPTSQFSVGETRLKQAIKDIKAELNERLAYFEHENKLVEYQRLKQRVEFDLEMLTSTGMCKGVENYARHLTGLKEGDTPYTLFDYFAIKNRKFLVIVDESHVSLPQFRGMFAGDRSRKQTLVDYGFRLPSALDNRPLMFDEFIHKNCQFLFVSATPAPLELELSKENIFHQIMRPTGLLDPLIELKDSDNQVEILFDEAKKVIQRNERVLVTVLTKKLAEELTRYYLELGIKVKYMHSDIDAIERNEIIRGLRSGAFDMLIGINLLREGLDLPEVSLIAIMDADKEGFLRSTTSLIQTMGRAARNVNGKVLLFCKKITKSMQEAMDTTNERRKLQMAYNKKYNITPTSVKRHIEESLKNEEDLGEIYRKGKKLEKMPASERAKLAKELRKQMLEAAKALEFEKAAAIRDEINKLRDL</sequence>
<accession>Q5HVA1</accession>
<protein>
    <recommendedName>
        <fullName evidence="1">UvrABC system protein B</fullName>
        <shortName evidence="1">Protein UvrB</shortName>
    </recommendedName>
    <alternativeName>
        <fullName evidence="1">Excinuclease ABC subunit B</fullName>
    </alternativeName>
</protein>
<feature type="chain" id="PRO_0000227296" description="UvrABC system protein B">
    <location>
        <begin position="1"/>
        <end position="657"/>
    </location>
</feature>
<feature type="domain" description="Helicase ATP-binding" evidence="1">
    <location>
        <begin position="23"/>
        <end position="414"/>
    </location>
</feature>
<feature type="domain" description="Helicase C-terminal" evidence="1">
    <location>
        <begin position="431"/>
        <end position="593"/>
    </location>
</feature>
<feature type="domain" description="UVR" evidence="1">
    <location>
        <begin position="622"/>
        <end position="657"/>
    </location>
</feature>
<feature type="short sequence motif" description="Beta-hairpin">
    <location>
        <begin position="89"/>
        <end position="112"/>
    </location>
</feature>
<feature type="binding site" evidence="1">
    <location>
        <begin position="36"/>
        <end position="43"/>
    </location>
    <ligand>
        <name>ATP</name>
        <dbReference type="ChEBI" id="CHEBI:30616"/>
    </ligand>
</feature>
<dbReference type="EMBL" id="CP000025">
    <property type="protein sequence ID" value="AAW34566.1"/>
    <property type="molecule type" value="Genomic_DNA"/>
</dbReference>
<dbReference type="RefSeq" id="WP_011049758.1">
    <property type="nucleotide sequence ID" value="NC_003912.7"/>
</dbReference>
<dbReference type="SMR" id="Q5HVA1"/>
<dbReference type="KEGG" id="cjr:CJE0778"/>
<dbReference type="HOGENOM" id="CLU_009621_2_1_7"/>
<dbReference type="GO" id="GO:0005737">
    <property type="term" value="C:cytoplasm"/>
    <property type="evidence" value="ECO:0007669"/>
    <property type="project" value="UniProtKB-SubCell"/>
</dbReference>
<dbReference type="GO" id="GO:0009380">
    <property type="term" value="C:excinuclease repair complex"/>
    <property type="evidence" value="ECO:0007669"/>
    <property type="project" value="InterPro"/>
</dbReference>
<dbReference type="GO" id="GO:0005524">
    <property type="term" value="F:ATP binding"/>
    <property type="evidence" value="ECO:0007669"/>
    <property type="project" value="UniProtKB-UniRule"/>
</dbReference>
<dbReference type="GO" id="GO:0016887">
    <property type="term" value="F:ATP hydrolysis activity"/>
    <property type="evidence" value="ECO:0007669"/>
    <property type="project" value="InterPro"/>
</dbReference>
<dbReference type="GO" id="GO:0003677">
    <property type="term" value="F:DNA binding"/>
    <property type="evidence" value="ECO:0007669"/>
    <property type="project" value="UniProtKB-UniRule"/>
</dbReference>
<dbReference type="GO" id="GO:0009381">
    <property type="term" value="F:excinuclease ABC activity"/>
    <property type="evidence" value="ECO:0007669"/>
    <property type="project" value="UniProtKB-UniRule"/>
</dbReference>
<dbReference type="GO" id="GO:0006289">
    <property type="term" value="P:nucleotide-excision repair"/>
    <property type="evidence" value="ECO:0007669"/>
    <property type="project" value="UniProtKB-UniRule"/>
</dbReference>
<dbReference type="GO" id="GO:0009432">
    <property type="term" value="P:SOS response"/>
    <property type="evidence" value="ECO:0007669"/>
    <property type="project" value="UniProtKB-UniRule"/>
</dbReference>
<dbReference type="CDD" id="cd17916">
    <property type="entry name" value="DEXHc_UvrB"/>
    <property type="match status" value="1"/>
</dbReference>
<dbReference type="CDD" id="cd18790">
    <property type="entry name" value="SF2_C_UvrB"/>
    <property type="match status" value="1"/>
</dbReference>
<dbReference type="Gene3D" id="3.40.50.300">
    <property type="entry name" value="P-loop containing nucleotide triphosphate hydrolases"/>
    <property type="match status" value="3"/>
</dbReference>
<dbReference type="Gene3D" id="4.10.860.10">
    <property type="entry name" value="UVR domain"/>
    <property type="match status" value="1"/>
</dbReference>
<dbReference type="HAMAP" id="MF_00204">
    <property type="entry name" value="UvrB"/>
    <property type="match status" value="1"/>
</dbReference>
<dbReference type="InterPro" id="IPR006935">
    <property type="entry name" value="Helicase/UvrB_N"/>
</dbReference>
<dbReference type="InterPro" id="IPR014001">
    <property type="entry name" value="Helicase_ATP-bd"/>
</dbReference>
<dbReference type="InterPro" id="IPR001650">
    <property type="entry name" value="Helicase_C-like"/>
</dbReference>
<dbReference type="InterPro" id="IPR027417">
    <property type="entry name" value="P-loop_NTPase"/>
</dbReference>
<dbReference type="InterPro" id="IPR001943">
    <property type="entry name" value="UVR_dom"/>
</dbReference>
<dbReference type="InterPro" id="IPR036876">
    <property type="entry name" value="UVR_dom_sf"/>
</dbReference>
<dbReference type="InterPro" id="IPR004807">
    <property type="entry name" value="UvrB"/>
</dbReference>
<dbReference type="InterPro" id="IPR041471">
    <property type="entry name" value="UvrB_inter"/>
</dbReference>
<dbReference type="InterPro" id="IPR024759">
    <property type="entry name" value="UvrB_YAD/RRR_dom"/>
</dbReference>
<dbReference type="NCBIfam" id="NF003673">
    <property type="entry name" value="PRK05298.1"/>
    <property type="match status" value="1"/>
</dbReference>
<dbReference type="NCBIfam" id="TIGR00631">
    <property type="entry name" value="uvrb"/>
    <property type="match status" value="1"/>
</dbReference>
<dbReference type="PANTHER" id="PTHR24029">
    <property type="entry name" value="UVRABC SYSTEM PROTEIN B"/>
    <property type="match status" value="1"/>
</dbReference>
<dbReference type="PANTHER" id="PTHR24029:SF0">
    <property type="entry name" value="UVRABC SYSTEM PROTEIN B"/>
    <property type="match status" value="1"/>
</dbReference>
<dbReference type="Pfam" id="PF00271">
    <property type="entry name" value="Helicase_C"/>
    <property type="match status" value="1"/>
</dbReference>
<dbReference type="Pfam" id="PF04851">
    <property type="entry name" value="ResIII"/>
    <property type="match status" value="1"/>
</dbReference>
<dbReference type="Pfam" id="PF02151">
    <property type="entry name" value="UVR"/>
    <property type="match status" value="1"/>
</dbReference>
<dbReference type="Pfam" id="PF12344">
    <property type="entry name" value="UvrB"/>
    <property type="match status" value="1"/>
</dbReference>
<dbReference type="Pfam" id="PF17757">
    <property type="entry name" value="UvrB_inter"/>
    <property type="match status" value="1"/>
</dbReference>
<dbReference type="SMART" id="SM00487">
    <property type="entry name" value="DEXDc"/>
    <property type="match status" value="1"/>
</dbReference>
<dbReference type="SMART" id="SM00490">
    <property type="entry name" value="HELICc"/>
    <property type="match status" value="1"/>
</dbReference>
<dbReference type="SUPFAM" id="SSF46600">
    <property type="entry name" value="C-terminal UvrC-binding domain of UvrB"/>
    <property type="match status" value="1"/>
</dbReference>
<dbReference type="SUPFAM" id="SSF52540">
    <property type="entry name" value="P-loop containing nucleoside triphosphate hydrolases"/>
    <property type="match status" value="2"/>
</dbReference>
<dbReference type="PROSITE" id="PS51192">
    <property type="entry name" value="HELICASE_ATP_BIND_1"/>
    <property type="match status" value="2"/>
</dbReference>
<dbReference type="PROSITE" id="PS51194">
    <property type="entry name" value="HELICASE_CTER"/>
    <property type="match status" value="1"/>
</dbReference>
<dbReference type="PROSITE" id="PS50151">
    <property type="entry name" value="UVR"/>
    <property type="match status" value="1"/>
</dbReference>
<proteinExistence type="inferred from homology"/>
<keyword id="KW-0067">ATP-binding</keyword>
<keyword id="KW-0963">Cytoplasm</keyword>
<keyword id="KW-0227">DNA damage</keyword>
<keyword id="KW-0228">DNA excision</keyword>
<keyword id="KW-0234">DNA repair</keyword>
<keyword id="KW-0267">Excision nuclease</keyword>
<keyword id="KW-0547">Nucleotide-binding</keyword>
<keyword id="KW-0742">SOS response</keyword>
<organism>
    <name type="scientific">Campylobacter jejuni (strain RM1221)</name>
    <dbReference type="NCBI Taxonomy" id="195099"/>
    <lineage>
        <taxon>Bacteria</taxon>
        <taxon>Pseudomonadati</taxon>
        <taxon>Campylobacterota</taxon>
        <taxon>Epsilonproteobacteria</taxon>
        <taxon>Campylobacterales</taxon>
        <taxon>Campylobacteraceae</taxon>
        <taxon>Campylobacter</taxon>
    </lineage>
</organism>
<gene>
    <name evidence="1" type="primary">uvrB</name>
    <name type="ordered locus">CJE0778</name>
</gene>
<evidence type="ECO:0000255" key="1">
    <source>
        <dbReference type="HAMAP-Rule" id="MF_00204"/>
    </source>
</evidence>
<reference key="1">
    <citation type="journal article" date="2005" name="PLoS Biol.">
        <title>Major structural differences and novel potential virulence mechanisms from the genomes of multiple Campylobacter species.</title>
        <authorList>
            <person name="Fouts D.E."/>
            <person name="Mongodin E.F."/>
            <person name="Mandrell R.E."/>
            <person name="Miller W.G."/>
            <person name="Rasko D.A."/>
            <person name="Ravel J."/>
            <person name="Brinkac L.M."/>
            <person name="DeBoy R.T."/>
            <person name="Parker C.T."/>
            <person name="Daugherty S.C."/>
            <person name="Dodson R.J."/>
            <person name="Durkin A.S."/>
            <person name="Madupu R."/>
            <person name="Sullivan S.A."/>
            <person name="Shetty J.U."/>
            <person name="Ayodeji M.A."/>
            <person name="Shvartsbeyn A."/>
            <person name="Schatz M.C."/>
            <person name="Badger J.H."/>
            <person name="Fraser C.M."/>
            <person name="Nelson K.E."/>
        </authorList>
    </citation>
    <scope>NUCLEOTIDE SEQUENCE [LARGE SCALE GENOMIC DNA]</scope>
    <source>
        <strain>RM1221</strain>
    </source>
</reference>
<name>UVRB_CAMJR</name>